<organismHost>
    <name type="scientific">Ornithodoros</name>
    <name type="common">relapsing fever ticks</name>
    <dbReference type="NCBI Taxonomy" id="6937"/>
</organismHost>
<organismHost>
    <name type="scientific">Phacochoerus aethiopicus</name>
    <name type="common">Warthog</name>
    <dbReference type="NCBI Taxonomy" id="85517"/>
</organismHost>
<organismHost>
    <name type="scientific">Phacochoerus africanus</name>
    <name type="common">Warthog</name>
    <dbReference type="NCBI Taxonomy" id="41426"/>
</organismHost>
<organismHost>
    <name type="scientific">Potamochoerus larvatus</name>
    <name type="common">Bushpig</name>
    <dbReference type="NCBI Taxonomy" id="273792"/>
</organismHost>
<organismHost>
    <name type="scientific">Sus scrofa</name>
    <name type="common">Pig</name>
    <dbReference type="NCBI Taxonomy" id="9823"/>
</organismHost>
<proteinExistence type="inferred from homology"/>
<protein>
    <recommendedName>
        <fullName>IkB-like protein</fullName>
    </recommendedName>
    <alternativeName>
        <fullName>Ankyrin repeat domain-containing protein A238L</fullName>
    </alternativeName>
    <alternativeName>
        <fullName>p28</fullName>
    </alternativeName>
</protein>
<accession>P0C966</accession>
<name>IKBL_ASFP4</name>
<gene>
    <name type="primary">A238L</name>
    <name type="ordered locus">Pret-051</name>
</gene>
<comment type="function">
    <text evidence="1 2">IkB-like protein that inhibits the binding of NF-kappa-B to DNA, thereby downregulating pro-inflammatory cytokine production (By similarity). Forms a heterodimer with the NF-kappa-B subunit RELA/p65 and prevents the activation of the NF-kappa-B transcription factor (By similarity). Inhibits calcineurin function, which is required for the induction of nuclear factor of activated T cells (NFAT)-dependent immune response genes. Prevents the binding of substrates to calcineurin without affecting the phosphatase activity (By similarity). Does not contain the serine residues that are phosphorylated by host IkB kinase and thus is not degraded following stimulation of the NFkB pathway (By similarity).</text>
</comment>
<comment type="subunit">
    <text evidence="1 2">Interacts with host PPIA. Interacts with host PPP3CA/Calcineurin (By similarity). Interacts with host RELA/p65; interaction of the 32 kDa form with host RELA results in the formation of a stable complex with NF-kappa-B (By similarity). Interacts with host PPP3R1 (By similarity). Interacts with host EP300; this interaction inhibits the association of host EP300 with host RELA, JUN and NFATC2 (By similarity).</text>
</comment>
<comment type="subcellular location">
    <subcellularLocation>
        <location evidence="2">Host nucleus</location>
    </subcellularLocation>
    <subcellularLocation>
        <location evidence="2">Host cytoplasm</location>
    </subcellularLocation>
    <text evidence="2">Binding to host PPP3CA/Calcineurin may mask the second nuclear localization signal thereby contributing to the cytoplasmic retention of A238L.</text>
</comment>
<comment type="induction">
    <text evidence="3">Expressed in the early phase of the viral replicative cycle.</text>
</comment>
<comment type="domain">
    <text evidence="1">The C-terminal region contains the docking motifs PxIxITxC and FLCV, which are required and sufficient for binding to host calcineurin.</text>
</comment>
<comment type="PTM">
    <text evidence="2">The protein exists in a 28 kDa and a 32 kDa form, probably due to post-translational modifications which are neither phosphorylation, nor sumoylation.</text>
</comment>
<comment type="similarity">
    <text evidence="3">Belongs to the asfivirus A238L family.</text>
</comment>
<organism>
    <name type="scientific">African swine fever virus (isolate Tick/South Africa/Pretoriuskop Pr4/1996)</name>
    <name type="common">ASFV</name>
    <dbReference type="NCBI Taxonomy" id="561443"/>
    <lineage>
        <taxon>Viruses</taxon>
        <taxon>Varidnaviria</taxon>
        <taxon>Bamfordvirae</taxon>
        <taxon>Nucleocytoviricota</taxon>
        <taxon>Pokkesviricetes</taxon>
        <taxon>Asfuvirales</taxon>
        <taxon>Asfarviridae</taxon>
        <taxon>Asfivirus</taxon>
        <taxon>African swine fever virus</taxon>
    </lineage>
</organism>
<dbReference type="EMBL" id="AY261363">
    <property type="status" value="NOT_ANNOTATED_CDS"/>
    <property type="molecule type" value="Genomic_DNA"/>
</dbReference>
<dbReference type="SMR" id="P0C966"/>
<dbReference type="Proteomes" id="UP000000859">
    <property type="component" value="Segment"/>
</dbReference>
<dbReference type="GO" id="GO:0030430">
    <property type="term" value="C:host cell cytoplasm"/>
    <property type="evidence" value="ECO:0007669"/>
    <property type="project" value="UniProtKB-SubCell"/>
</dbReference>
<dbReference type="GO" id="GO:0042025">
    <property type="term" value="C:host cell nucleus"/>
    <property type="evidence" value="ECO:0007669"/>
    <property type="project" value="UniProtKB-SubCell"/>
</dbReference>
<dbReference type="GO" id="GO:0010468">
    <property type="term" value="P:regulation of gene expression"/>
    <property type="evidence" value="ECO:0007669"/>
    <property type="project" value="TreeGrafter"/>
</dbReference>
<dbReference type="GO" id="GO:0085034">
    <property type="term" value="P:symbiont-mediated suppression of host NF-kappaB cascade"/>
    <property type="evidence" value="ECO:0007669"/>
    <property type="project" value="UniProtKB-KW"/>
</dbReference>
<dbReference type="FunFam" id="1.25.40.20:FF:001205">
    <property type="entry name" value="Predicted protein"/>
    <property type="match status" value="1"/>
</dbReference>
<dbReference type="Gene3D" id="1.25.40.20">
    <property type="entry name" value="Ankyrin repeat-containing domain"/>
    <property type="match status" value="1"/>
</dbReference>
<dbReference type="InterPro" id="IPR002110">
    <property type="entry name" value="Ankyrin_rpt"/>
</dbReference>
<dbReference type="InterPro" id="IPR036770">
    <property type="entry name" value="Ankyrin_rpt-contain_sf"/>
</dbReference>
<dbReference type="PANTHER" id="PTHR24124">
    <property type="entry name" value="ANKYRIN REPEAT FAMILY A"/>
    <property type="match status" value="1"/>
</dbReference>
<dbReference type="PANTHER" id="PTHR24124:SF14">
    <property type="entry name" value="CHROMOSOME UNDETERMINED SCAFFOLD_25, WHOLE GENOME SHOTGUN SEQUENCE"/>
    <property type="match status" value="1"/>
</dbReference>
<dbReference type="Pfam" id="PF12796">
    <property type="entry name" value="Ank_2"/>
    <property type="match status" value="1"/>
</dbReference>
<dbReference type="SMART" id="SM00248">
    <property type="entry name" value="ANK"/>
    <property type="match status" value="4"/>
</dbReference>
<dbReference type="SUPFAM" id="SSF48403">
    <property type="entry name" value="Ankyrin repeat"/>
    <property type="match status" value="1"/>
</dbReference>
<dbReference type="PROSITE" id="PS50297">
    <property type="entry name" value="ANK_REP_REGION"/>
    <property type="match status" value="1"/>
</dbReference>
<dbReference type="PROSITE" id="PS50088">
    <property type="entry name" value="ANK_REPEAT"/>
    <property type="match status" value="1"/>
</dbReference>
<sequence>MEHMFPENQIENLFVGWIKKHIRNGDLTLFEEFFKTDPWIVNRCDKNGSSVFMWICIYGRIDFLKFLFKQESYPGEIINHHRRDNDGNSALHYLAEKKNHLILEEVLGYFGKNGTRICLPNFNGMTPVMKAAMRGRTLNMLSLIKFGADPTQKDYHRGFTAWDWAVFTGNMELVKSLNHDYQKPLYMHFPLYKLDVFHRWFKKKPKIIITGCKNNVYEKLPEQNPNFLCVKKLNKYGK</sequence>
<keyword id="KW-0040">ANK repeat</keyword>
<keyword id="KW-0244">Early protein</keyword>
<keyword id="KW-1035">Host cytoplasm</keyword>
<keyword id="KW-1048">Host nucleus</keyword>
<keyword id="KW-0945">Host-virus interaction</keyword>
<keyword id="KW-1100">Inhibition of host NF-kappa-B by virus</keyword>
<keyword id="KW-0677">Repeat</keyword>
<keyword id="KW-0832">Ubl conjugation</keyword>
<reference key="1">
    <citation type="submission" date="2003-03" db="EMBL/GenBank/DDBJ databases">
        <title>African swine fever virus genomes.</title>
        <authorList>
            <person name="Kutish G.F."/>
            <person name="Rock D.L."/>
        </authorList>
    </citation>
    <scope>NUCLEOTIDE SEQUENCE [LARGE SCALE GENOMIC DNA]</scope>
</reference>
<evidence type="ECO:0000250" key="1">
    <source>
        <dbReference type="UniProtKB" id="O36972"/>
    </source>
</evidence>
<evidence type="ECO:0000250" key="2">
    <source>
        <dbReference type="UniProtKB" id="Q76U48"/>
    </source>
</evidence>
<evidence type="ECO:0000305" key="3"/>
<feature type="chain" id="PRO_0000372837" description="IkB-like protein">
    <location>
        <begin position="1"/>
        <end position="238"/>
    </location>
</feature>
<feature type="repeat" description="ANK 1">
    <location>
        <begin position="48"/>
        <end position="80"/>
    </location>
</feature>
<feature type="repeat" description="ANK 2">
    <location>
        <begin position="87"/>
        <end position="118"/>
    </location>
</feature>
<feature type="repeat" description="ANK 3">
    <location>
        <begin position="124"/>
        <end position="153"/>
    </location>
</feature>
<feature type="repeat" description="ANK 4">
    <location>
        <begin position="158"/>
        <end position="187"/>
    </location>
</feature>
<feature type="short sequence motif" description="Nuclear localization signal" evidence="2">
    <location>
        <begin position="80"/>
        <end position="86"/>
    </location>
</feature>
<feature type="short sequence motif" description="Nuclear localization signal" evidence="2">
    <location>
        <begin position="202"/>
        <end position="213"/>
    </location>
</feature>
<feature type="short sequence motif" description="PxIxITxC motif; Interaction with host PPP3CA" evidence="1">
    <location>
        <begin position="205"/>
        <end position="212"/>
    </location>
</feature>
<feature type="short sequence motif" description="FLCV motif" evidence="1">
    <location>
        <begin position="227"/>
        <end position="230"/>
    </location>
</feature>